<protein>
    <recommendedName>
        <fullName evidence="1">Small ribosomal subunit protein uS2</fullName>
    </recommendedName>
    <alternativeName>
        <fullName evidence="3">30S ribosomal protein S2</fullName>
    </alternativeName>
</protein>
<accession>A8Z3T6</accession>
<reference key="1">
    <citation type="journal article" date="2007" name="BMC Microbiol.">
        <title>Subtle genetic changes enhance virulence of methicillin resistant and sensitive Staphylococcus aureus.</title>
        <authorList>
            <person name="Highlander S.K."/>
            <person name="Hulten K.G."/>
            <person name="Qin X."/>
            <person name="Jiang H."/>
            <person name="Yerrapragada S."/>
            <person name="Mason E.O. Jr."/>
            <person name="Shang Y."/>
            <person name="Williams T.M."/>
            <person name="Fortunov R.M."/>
            <person name="Liu Y."/>
            <person name="Igboeli O."/>
            <person name="Petrosino J."/>
            <person name="Tirumalai M."/>
            <person name="Uzman A."/>
            <person name="Fox G.E."/>
            <person name="Cardenas A.M."/>
            <person name="Muzny D.M."/>
            <person name="Hemphill L."/>
            <person name="Ding Y."/>
            <person name="Dugan S."/>
            <person name="Blyth P.R."/>
            <person name="Buhay C.J."/>
            <person name="Dinh H.H."/>
            <person name="Hawes A.C."/>
            <person name="Holder M."/>
            <person name="Kovar C.L."/>
            <person name="Lee S.L."/>
            <person name="Liu W."/>
            <person name="Nazareth L.V."/>
            <person name="Wang Q."/>
            <person name="Zhou J."/>
            <person name="Kaplan S.L."/>
            <person name="Weinstock G.M."/>
        </authorList>
    </citation>
    <scope>NUCLEOTIDE SEQUENCE [LARGE SCALE GENOMIC DNA]</scope>
    <source>
        <strain>USA300 / TCH1516</strain>
    </source>
</reference>
<comment type="similarity">
    <text evidence="1">Belongs to the universal ribosomal protein uS2 family.</text>
</comment>
<proteinExistence type="inferred from homology"/>
<gene>
    <name evidence="1" type="primary">rpsB</name>
    <name type="ordered locus">USA300HOU_1188</name>
</gene>
<name>RS2_STAAT</name>
<organism>
    <name type="scientific">Staphylococcus aureus (strain USA300 / TCH1516)</name>
    <dbReference type="NCBI Taxonomy" id="451516"/>
    <lineage>
        <taxon>Bacteria</taxon>
        <taxon>Bacillati</taxon>
        <taxon>Bacillota</taxon>
        <taxon>Bacilli</taxon>
        <taxon>Bacillales</taxon>
        <taxon>Staphylococcaceae</taxon>
        <taxon>Staphylococcus</taxon>
    </lineage>
</organism>
<sequence>MAVISMKQLLEAGVHFGHQTRRWNPKMKKYIFTERNGIYIIDLQKTVKKVDEAYNFLKQVSEDGGQVLFVGTKKQAQESVKSEAERAGQFYINQRWLGGLLTNYKTISKRIKRISEIEKMEEDGLFEVLPKKEVVELKKEYDRLIKFLGGIRDMKSMPQALFVVDPRKERNAIAEARKLNIPIVGIVDTNCDPDEIDYVIPANDDAIRAVKLLTAKMADAILEGQQGVSNEEVAAEQNIDLDEKEKSEETEATEE</sequence>
<evidence type="ECO:0000255" key="1">
    <source>
        <dbReference type="HAMAP-Rule" id="MF_00291"/>
    </source>
</evidence>
<evidence type="ECO:0000256" key="2">
    <source>
        <dbReference type="SAM" id="MobiDB-lite"/>
    </source>
</evidence>
<evidence type="ECO:0000305" key="3"/>
<keyword id="KW-0687">Ribonucleoprotein</keyword>
<keyword id="KW-0689">Ribosomal protein</keyword>
<dbReference type="EMBL" id="CP000730">
    <property type="protein sequence ID" value="ABX29202.1"/>
    <property type="molecule type" value="Genomic_DNA"/>
</dbReference>
<dbReference type="RefSeq" id="WP_000268484.1">
    <property type="nucleotide sequence ID" value="NC_010079.1"/>
</dbReference>
<dbReference type="SMR" id="A8Z3T6"/>
<dbReference type="GeneID" id="98345571"/>
<dbReference type="KEGG" id="sax:USA300HOU_1188"/>
<dbReference type="HOGENOM" id="CLU_040318_1_2_9"/>
<dbReference type="GO" id="GO:0022627">
    <property type="term" value="C:cytosolic small ribosomal subunit"/>
    <property type="evidence" value="ECO:0007669"/>
    <property type="project" value="TreeGrafter"/>
</dbReference>
<dbReference type="GO" id="GO:0003735">
    <property type="term" value="F:structural constituent of ribosome"/>
    <property type="evidence" value="ECO:0007669"/>
    <property type="project" value="InterPro"/>
</dbReference>
<dbReference type="GO" id="GO:0006412">
    <property type="term" value="P:translation"/>
    <property type="evidence" value="ECO:0007669"/>
    <property type="project" value="UniProtKB-UniRule"/>
</dbReference>
<dbReference type="CDD" id="cd01425">
    <property type="entry name" value="RPS2"/>
    <property type="match status" value="1"/>
</dbReference>
<dbReference type="FunFam" id="1.10.287.610:FF:000001">
    <property type="entry name" value="30S ribosomal protein S2"/>
    <property type="match status" value="1"/>
</dbReference>
<dbReference type="Gene3D" id="3.40.50.10490">
    <property type="entry name" value="Glucose-6-phosphate isomerase like protein, domain 1"/>
    <property type="match status" value="1"/>
</dbReference>
<dbReference type="Gene3D" id="1.10.287.610">
    <property type="entry name" value="Helix hairpin bin"/>
    <property type="match status" value="1"/>
</dbReference>
<dbReference type="HAMAP" id="MF_00291_B">
    <property type="entry name" value="Ribosomal_uS2_B"/>
    <property type="match status" value="1"/>
</dbReference>
<dbReference type="InterPro" id="IPR001865">
    <property type="entry name" value="Ribosomal_uS2"/>
</dbReference>
<dbReference type="InterPro" id="IPR005706">
    <property type="entry name" value="Ribosomal_uS2_bac/mit/plastid"/>
</dbReference>
<dbReference type="InterPro" id="IPR018130">
    <property type="entry name" value="Ribosomal_uS2_CS"/>
</dbReference>
<dbReference type="InterPro" id="IPR023591">
    <property type="entry name" value="Ribosomal_uS2_flav_dom_sf"/>
</dbReference>
<dbReference type="NCBIfam" id="TIGR01011">
    <property type="entry name" value="rpsB_bact"/>
    <property type="match status" value="1"/>
</dbReference>
<dbReference type="PANTHER" id="PTHR12534">
    <property type="entry name" value="30S RIBOSOMAL PROTEIN S2 PROKARYOTIC AND ORGANELLAR"/>
    <property type="match status" value="1"/>
</dbReference>
<dbReference type="PANTHER" id="PTHR12534:SF0">
    <property type="entry name" value="SMALL RIBOSOMAL SUBUNIT PROTEIN US2M"/>
    <property type="match status" value="1"/>
</dbReference>
<dbReference type="Pfam" id="PF00318">
    <property type="entry name" value="Ribosomal_S2"/>
    <property type="match status" value="1"/>
</dbReference>
<dbReference type="PRINTS" id="PR00395">
    <property type="entry name" value="RIBOSOMALS2"/>
</dbReference>
<dbReference type="SUPFAM" id="SSF52313">
    <property type="entry name" value="Ribosomal protein S2"/>
    <property type="match status" value="1"/>
</dbReference>
<dbReference type="PROSITE" id="PS00962">
    <property type="entry name" value="RIBOSOMAL_S2_1"/>
    <property type="match status" value="1"/>
</dbReference>
<dbReference type="PROSITE" id="PS00963">
    <property type="entry name" value="RIBOSOMAL_S2_2"/>
    <property type="match status" value="1"/>
</dbReference>
<feature type="chain" id="PRO_1000078905" description="Small ribosomal subunit protein uS2">
    <location>
        <begin position="1"/>
        <end position="255"/>
    </location>
</feature>
<feature type="region of interest" description="Disordered" evidence="2">
    <location>
        <begin position="226"/>
        <end position="255"/>
    </location>
</feature>